<dbReference type="EMBL" id="FM209186">
    <property type="protein sequence ID" value="CAW28004.1"/>
    <property type="molecule type" value="Genomic_DNA"/>
</dbReference>
<dbReference type="KEGG" id="pag:PLES_32771"/>
<dbReference type="HOGENOM" id="CLU_144811_6_1_6"/>
<dbReference type="GO" id="GO:0005886">
    <property type="term" value="C:plasma membrane"/>
    <property type="evidence" value="ECO:0007669"/>
    <property type="project" value="UniProtKB-SubCell"/>
</dbReference>
<dbReference type="HAMAP" id="MF_00386">
    <property type="entry name" value="UPF0161_YidD"/>
    <property type="match status" value="1"/>
</dbReference>
<dbReference type="InterPro" id="IPR002696">
    <property type="entry name" value="Membr_insert_effic_factor_YidD"/>
</dbReference>
<dbReference type="NCBIfam" id="TIGR00278">
    <property type="entry name" value="membrane protein insertion efficiency factor YidD"/>
    <property type="match status" value="1"/>
</dbReference>
<dbReference type="PANTHER" id="PTHR33383">
    <property type="entry name" value="MEMBRANE PROTEIN INSERTION EFFICIENCY FACTOR-RELATED"/>
    <property type="match status" value="1"/>
</dbReference>
<dbReference type="PANTHER" id="PTHR33383:SF1">
    <property type="entry name" value="MEMBRANE PROTEIN INSERTION EFFICIENCY FACTOR-RELATED"/>
    <property type="match status" value="1"/>
</dbReference>
<dbReference type="Pfam" id="PF01809">
    <property type="entry name" value="YidD"/>
    <property type="match status" value="1"/>
</dbReference>
<dbReference type="SMART" id="SM01234">
    <property type="entry name" value="Haemolytic"/>
    <property type="match status" value="1"/>
</dbReference>
<organism>
    <name type="scientific">Pseudomonas aeruginosa (strain LESB58)</name>
    <dbReference type="NCBI Taxonomy" id="557722"/>
    <lineage>
        <taxon>Bacteria</taxon>
        <taxon>Pseudomonadati</taxon>
        <taxon>Pseudomonadota</taxon>
        <taxon>Gammaproteobacteria</taxon>
        <taxon>Pseudomonadales</taxon>
        <taxon>Pseudomonadaceae</taxon>
        <taxon>Pseudomonas</taxon>
    </lineage>
</organism>
<reference key="1">
    <citation type="journal article" date="2009" name="Genome Res.">
        <title>Newly introduced genomic prophage islands are critical determinants of in vivo competitiveness in the Liverpool epidemic strain of Pseudomonas aeruginosa.</title>
        <authorList>
            <person name="Winstanley C."/>
            <person name="Langille M.G.I."/>
            <person name="Fothergill J.L."/>
            <person name="Kukavica-Ibrulj I."/>
            <person name="Paradis-Bleau C."/>
            <person name="Sanschagrin F."/>
            <person name="Thomson N.R."/>
            <person name="Winsor G.L."/>
            <person name="Quail M.A."/>
            <person name="Lennard N."/>
            <person name="Bignell A."/>
            <person name="Clarke L."/>
            <person name="Seeger K."/>
            <person name="Saunders D."/>
            <person name="Harris D."/>
            <person name="Parkhill J."/>
            <person name="Hancock R.E.W."/>
            <person name="Brinkman F.S.L."/>
            <person name="Levesque R.C."/>
        </authorList>
    </citation>
    <scope>NUCLEOTIDE SEQUENCE [LARGE SCALE GENOMIC DNA]</scope>
    <source>
        <strain>LESB58</strain>
    </source>
</reference>
<evidence type="ECO:0000255" key="1">
    <source>
        <dbReference type="HAMAP-Rule" id="MF_00386"/>
    </source>
</evidence>
<protein>
    <recommendedName>
        <fullName evidence="1">Putative membrane protein insertion efficiency factor</fullName>
    </recommendedName>
</protein>
<name>YIDD_PSEA8</name>
<proteinExistence type="inferred from homology"/>
<feature type="chain" id="PRO_1000197772" description="Putative membrane protein insertion efficiency factor">
    <location>
        <begin position="1"/>
        <end position="86"/>
    </location>
</feature>
<accession>B7VA59</accession>
<keyword id="KW-0997">Cell inner membrane</keyword>
<keyword id="KW-1003">Cell membrane</keyword>
<keyword id="KW-0472">Membrane</keyword>
<gene>
    <name type="ordered locus">PLES_32771</name>
</gene>
<comment type="function">
    <text evidence="1">Could be involved in insertion of integral membrane proteins into the membrane.</text>
</comment>
<comment type="subcellular location">
    <subcellularLocation>
        <location evidence="1">Cell inner membrane</location>
        <topology evidence="1">Peripheral membrane protein</topology>
        <orientation evidence="1">Cytoplasmic side</orientation>
    </subcellularLocation>
</comment>
<comment type="similarity">
    <text evidence="1">Belongs to the UPF0161 family.</text>
</comment>
<sequence>MKFLLIGLIRFYQYAISPLIGPRCRFYPSCSHYTLEAIRVHGALRGGYLGARRLLRCHPWHPGGYDPVPERQEQACACHRTAKPGK</sequence>